<proteinExistence type="inferred from homology"/>
<evidence type="ECO:0000255" key="1">
    <source>
        <dbReference type="HAMAP-Rule" id="MF_00121"/>
    </source>
</evidence>
<feature type="chain" id="PRO_1000117622" description="Aspartyl/glutamyl-tRNA(Asn/Gln) amidotransferase subunit B">
    <location>
        <begin position="1"/>
        <end position="481"/>
    </location>
</feature>
<reference key="1">
    <citation type="journal article" date="2009" name="Genome Res.">
        <title>Newly introduced genomic prophage islands are critical determinants of in vivo competitiveness in the Liverpool epidemic strain of Pseudomonas aeruginosa.</title>
        <authorList>
            <person name="Winstanley C."/>
            <person name="Langille M.G.I."/>
            <person name="Fothergill J.L."/>
            <person name="Kukavica-Ibrulj I."/>
            <person name="Paradis-Bleau C."/>
            <person name="Sanschagrin F."/>
            <person name="Thomson N.R."/>
            <person name="Winsor G.L."/>
            <person name="Quail M.A."/>
            <person name="Lennard N."/>
            <person name="Bignell A."/>
            <person name="Clarke L."/>
            <person name="Seeger K."/>
            <person name="Saunders D."/>
            <person name="Harris D."/>
            <person name="Parkhill J."/>
            <person name="Hancock R.E.W."/>
            <person name="Brinkman F.S.L."/>
            <person name="Levesque R.C."/>
        </authorList>
    </citation>
    <scope>NUCLEOTIDE SEQUENCE [LARGE SCALE GENOMIC DNA]</scope>
    <source>
        <strain>LESB58</strain>
    </source>
</reference>
<keyword id="KW-0067">ATP-binding</keyword>
<keyword id="KW-0436">Ligase</keyword>
<keyword id="KW-0547">Nucleotide-binding</keyword>
<keyword id="KW-0648">Protein biosynthesis</keyword>
<organism>
    <name type="scientific">Pseudomonas aeruginosa (strain LESB58)</name>
    <dbReference type="NCBI Taxonomy" id="557722"/>
    <lineage>
        <taxon>Bacteria</taxon>
        <taxon>Pseudomonadati</taxon>
        <taxon>Pseudomonadota</taxon>
        <taxon>Gammaproteobacteria</taxon>
        <taxon>Pseudomonadales</taxon>
        <taxon>Pseudomonadaceae</taxon>
        <taxon>Pseudomonas</taxon>
    </lineage>
</organism>
<accession>B7V024</accession>
<name>GATB_PSEA8</name>
<comment type="function">
    <text evidence="1">Allows the formation of correctly charged Asn-tRNA(Asn) or Gln-tRNA(Gln) through the transamidation of misacylated Asp-tRNA(Asn) or Glu-tRNA(Gln) in organisms which lack either or both of asparaginyl-tRNA or glutaminyl-tRNA synthetases. The reaction takes place in the presence of glutamine and ATP through an activated phospho-Asp-tRNA(Asn) or phospho-Glu-tRNA(Gln).</text>
</comment>
<comment type="catalytic activity">
    <reaction evidence="1">
        <text>L-glutamyl-tRNA(Gln) + L-glutamine + ATP + H2O = L-glutaminyl-tRNA(Gln) + L-glutamate + ADP + phosphate + H(+)</text>
        <dbReference type="Rhea" id="RHEA:17521"/>
        <dbReference type="Rhea" id="RHEA-COMP:9681"/>
        <dbReference type="Rhea" id="RHEA-COMP:9684"/>
        <dbReference type="ChEBI" id="CHEBI:15377"/>
        <dbReference type="ChEBI" id="CHEBI:15378"/>
        <dbReference type="ChEBI" id="CHEBI:29985"/>
        <dbReference type="ChEBI" id="CHEBI:30616"/>
        <dbReference type="ChEBI" id="CHEBI:43474"/>
        <dbReference type="ChEBI" id="CHEBI:58359"/>
        <dbReference type="ChEBI" id="CHEBI:78520"/>
        <dbReference type="ChEBI" id="CHEBI:78521"/>
        <dbReference type="ChEBI" id="CHEBI:456216"/>
    </reaction>
</comment>
<comment type="catalytic activity">
    <reaction evidence="1">
        <text>L-aspartyl-tRNA(Asn) + L-glutamine + ATP + H2O = L-asparaginyl-tRNA(Asn) + L-glutamate + ADP + phosphate + 2 H(+)</text>
        <dbReference type="Rhea" id="RHEA:14513"/>
        <dbReference type="Rhea" id="RHEA-COMP:9674"/>
        <dbReference type="Rhea" id="RHEA-COMP:9677"/>
        <dbReference type="ChEBI" id="CHEBI:15377"/>
        <dbReference type="ChEBI" id="CHEBI:15378"/>
        <dbReference type="ChEBI" id="CHEBI:29985"/>
        <dbReference type="ChEBI" id="CHEBI:30616"/>
        <dbReference type="ChEBI" id="CHEBI:43474"/>
        <dbReference type="ChEBI" id="CHEBI:58359"/>
        <dbReference type="ChEBI" id="CHEBI:78515"/>
        <dbReference type="ChEBI" id="CHEBI:78516"/>
        <dbReference type="ChEBI" id="CHEBI:456216"/>
    </reaction>
</comment>
<comment type="subunit">
    <text evidence="1">Heterotrimer of A, B and C subunits.</text>
</comment>
<comment type="similarity">
    <text evidence="1">Belongs to the GatB/GatE family. GatB subfamily.</text>
</comment>
<dbReference type="EC" id="6.3.5.-" evidence="1"/>
<dbReference type="EMBL" id="FM209186">
    <property type="protein sequence ID" value="CAW29618.1"/>
    <property type="molecule type" value="Genomic_DNA"/>
</dbReference>
<dbReference type="SMR" id="B7V024"/>
<dbReference type="KEGG" id="pag:PLES_48641"/>
<dbReference type="HOGENOM" id="CLU_019240_0_0_6"/>
<dbReference type="GO" id="GO:0050566">
    <property type="term" value="F:asparaginyl-tRNA synthase (glutamine-hydrolyzing) activity"/>
    <property type="evidence" value="ECO:0007669"/>
    <property type="project" value="RHEA"/>
</dbReference>
<dbReference type="GO" id="GO:0005524">
    <property type="term" value="F:ATP binding"/>
    <property type="evidence" value="ECO:0007669"/>
    <property type="project" value="UniProtKB-KW"/>
</dbReference>
<dbReference type="GO" id="GO:0050567">
    <property type="term" value="F:glutaminyl-tRNA synthase (glutamine-hydrolyzing) activity"/>
    <property type="evidence" value="ECO:0007669"/>
    <property type="project" value="UniProtKB-UniRule"/>
</dbReference>
<dbReference type="GO" id="GO:0070681">
    <property type="term" value="P:glutaminyl-tRNAGln biosynthesis via transamidation"/>
    <property type="evidence" value="ECO:0007669"/>
    <property type="project" value="TreeGrafter"/>
</dbReference>
<dbReference type="GO" id="GO:0006412">
    <property type="term" value="P:translation"/>
    <property type="evidence" value="ECO:0007669"/>
    <property type="project" value="UniProtKB-UniRule"/>
</dbReference>
<dbReference type="FunFam" id="1.10.10.410:FF:000001">
    <property type="entry name" value="Aspartyl/glutamyl-tRNA(Asn/Gln) amidotransferase subunit B"/>
    <property type="match status" value="1"/>
</dbReference>
<dbReference type="FunFam" id="1.10.150.380:FF:000001">
    <property type="entry name" value="Aspartyl/glutamyl-tRNA(Asn/Gln) amidotransferase subunit B"/>
    <property type="match status" value="1"/>
</dbReference>
<dbReference type="Gene3D" id="1.10.10.410">
    <property type="match status" value="1"/>
</dbReference>
<dbReference type="Gene3D" id="1.10.150.380">
    <property type="entry name" value="GatB domain, N-terminal subdomain"/>
    <property type="match status" value="1"/>
</dbReference>
<dbReference type="HAMAP" id="MF_00121">
    <property type="entry name" value="GatB"/>
    <property type="match status" value="1"/>
</dbReference>
<dbReference type="InterPro" id="IPR017959">
    <property type="entry name" value="Asn/Gln-tRNA_amidoTrfase_suB/E"/>
</dbReference>
<dbReference type="InterPro" id="IPR006075">
    <property type="entry name" value="Asn/Gln-tRNA_Trfase_suB/E_cat"/>
</dbReference>
<dbReference type="InterPro" id="IPR018027">
    <property type="entry name" value="Asn/Gln_amidotransferase"/>
</dbReference>
<dbReference type="InterPro" id="IPR003789">
    <property type="entry name" value="Asn/Gln_tRNA_amidoTrase-B-like"/>
</dbReference>
<dbReference type="InterPro" id="IPR004413">
    <property type="entry name" value="GatB"/>
</dbReference>
<dbReference type="InterPro" id="IPR042114">
    <property type="entry name" value="GatB_C_1"/>
</dbReference>
<dbReference type="InterPro" id="IPR023168">
    <property type="entry name" value="GatB_Yqey_C_2"/>
</dbReference>
<dbReference type="InterPro" id="IPR017958">
    <property type="entry name" value="Gln-tRNA_amidoTrfase_suB_CS"/>
</dbReference>
<dbReference type="InterPro" id="IPR014746">
    <property type="entry name" value="Gln_synth/guanido_kin_cat_dom"/>
</dbReference>
<dbReference type="NCBIfam" id="TIGR00133">
    <property type="entry name" value="gatB"/>
    <property type="match status" value="1"/>
</dbReference>
<dbReference type="NCBIfam" id="NF004012">
    <property type="entry name" value="PRK05477.1-2"/>
    <property type="match status" value="1"/>
</dbReference>
<dbReference type="NCBIfam" id="NF004014">
    <property type="entry name" value="PRK05477.1-4"/>
    <property type="match status" value="1"/>
</dbReference>
<dbReference type="NCBIfam" id="NF004015">
    <property type="entry name" value="PRK05477.1-5"/>
    <property type="match status" value="1"/>
</dbReference>
<dbReference type="PANTHER" id="PTHR11659">
    <property type="entry name" value="GLUTAMYL-TRNA GLN AMIDOTRANSFERASE SUBUNIT B MITOCHONDRIAL AND PROKARYOTIC PET112-RELATED"/>
    <property type="match status" value="1"/>
</dbReference>
<dbReference type="PANTHER" id="PTHR11659:SF0">
    <property type="entry name" value="GLUTAMYL-TRNA(GLN) AMIDOTRANSFERASE SUBUNIT B, MITOCHONDRIAL"/>
    <property type="match status" value="1"/>
</dbReference>
<dbReference type="Pfam" id="PF02934">
    <property type="entry name" value="GatB_N"/>
    <property type="match status" value="1"/>
</dbReference>
<dbReference type="Pfam" id="PF02637">
    <property type="entry name" value="GatB_Yqey"/>
    <property type="match status" value="1"/>
</dbReference>
<dbReference type="SMART" id="SM00845">
    <property type="entry name" value="GatB_Yqey"/>
    <property type="match status" value="1"/>
</dbReference>
<dbReference type="SUPFAM" id="SSF89095">
    <property type="entry name" value="GatB/YqeY motif"/>
    <property type="match status" value="1"/>
</dbReference>
<dbReference type="SUPFAM" id="SSF55931">
    <property type="entry name" value="Glutamine synthetase/guanido kinase"/>
    <property type="match status" value="1"/>
</dbReference>
<dbReference type="PROSITE" id="PS01234">
    <property type="entry name" value="GATB"/>
    <property type="match status" value="1"/>
</dbReference>
<sequence>MQWETVIGLEIHAQLATQSKIFSGSSTAFGAAPNTQASLVDLAMPGTLPVLNEEAVRMACLFGLAIDARIDRQNVFARKNYFYPDLPKGYQTSQMDHPIVGKGHLDITLEDGTTKRIGITRAHLEEDAGKSLHEDFQGMSGIDLNRAGTPLLEIVSEPDIRSAKEAVAYVKAIHALVRYLGICDGNMAEGSLRCDCNVSVRPKGQAEFGTRAEIKNVNSFRFIEKAINHEIQRQIELIEDGGKVVQETRLYDPNKDETRSMRGKEEANDYRYFPCPDLLPVVIEPEYLAKLREQLPELPVQKRERFESQYGLSAYDASVLSASREMADYFEKVQGICGDAKLAANWVMVELGSLLNKDGLEIEQSPVSAEQLGGMILRIKDNTISGKLAKMVFEAMANGEGSADQIIEAKGLKQVTDSGAIEKMLDEVLAANAEQVEQYRAADEAKRGKMFGFFVGQAMKASKGKANPQQVNELLKKKLEA</sequence>
<protein>
    <recommendedName>
        <fullName evidence="1">Aspartyl/glutamyl-tRNA(Asn/Gln) amidotransferase subunit B</fullName>
        <shortName evidence="1">Asp/Glu-ADT subunit B</shortName>
        <ecNumber evidence="1">6.3.5.-</ecNumber>
    </recommendedName>
</protein>
<gene>
    <name evidence="1" type="primary">gatB</name>
    <name type="ordered locus">PLES_48641</name>
</gene>